<organism>
    <name type="scientific">Yersinia pseudotuberculosis serotype O:3 (strain YPIII)</name>
    <dbReference type="NCBI Taxonomy" id="502800"/>
    <lineage>
        <taxon>Bacteria</taxon>
        <taxon>Pseudomonadati</taxon>
        <taxon>Pseudomonadota</taxon>
        <taxon>Gammaproteobacteria</taxon>
        <taxon>Enterobacterales</taxon>
        <taxon>Yersiniaceae</taxon>
        <taxon>Yersinia</taxon>
    </lineage>
</organism>
<reference key="1">
    <citation type="submission" date="2008-02" db="EMBL/GenBank/DDBJ databases">
        <title>Complete sequence of Yersinia pseudotuberculosis YPIII.</title>
        <authorList>
            <consortium name="US DOE Joint Genome Institute"/>
            <person name="Copeland A."/>
            <person name="Lucas S."/>
            <person name="Lapidus A."/>
            <person name="Glavina del Rio T."/>
            <person name="Dalin E."/>
            <person name="Tice H."/>
            <person name="Bruce D."/>
            <person name="Goodwin L."/>
            <person name="Pitluck S."/>
            <person name="Munk A.C."/>
            <person name="Brettin T."/>
            <person name="Detter J.C."/>
            <person name="Han C."/>
            <person name="Tapia R."/>
            <person name="Schmutz J."/>
            <person name="Larimer F."/>
            <person name="Land M."/>
            <person name="Hauser L."/>
            <person name="Challacombe J.F."/>
            <person name="Green L."/>
            <person name="Lindler L.E."/>
            <person name="Nikolich M.P."/>
            <person name="Richardson P."/>
        </authorList>
    </citation>
    <scope>NUCLEOTIDE SEQUENCE [LARGE SCALE GENOMIC DNA]</scope>
    <source>
        <strain>YPIII</strain>
    </source>
</reference>
<comment type="function">
    <text evidence="1">Catalyzes the dehydration of methylthioribulose-1-phosphate (MTRu-1-P) into 2,3-diketo-5-methylthiopentyl-1-phosphate (DK-MTP-1-P).</text>
</comment>
<comment type="catalytic activity">
    <reaction evidence="1">
        <text>5-(methylsulfanyl)-D-ribulose 1-phosphate = 5-methylsulfanyl-2,3-dioxopentyl phosphate + H2O</text>
        <dbReference type="Rhea" id="RHEA:15549"/>
        <dbReference type="ChEBI" id="CHEBI:15377"/>
        <dbReference type="ChEBI" id="CHEBI:58548"/>
        <dbReference type="ChEBI" id="CHEBI:58828"/>
        <dbReference type="EC" id="4.2.1.109"/>
    </reaction>
</comment>
<comment type="cofactor">
    <cofactor evidence="1">
        <name>Zn(2+)</name>
        <dbReference type="ChEBI" id="CHEBI:29105"/>
    </cofactor>
    <text evidence="1">Binds 1 zinc ion per subunit.</text>
</comment>
<comment type="pathway">
    <text evidence="1">Amino-acid biosynthesis; L-methionine biosynthesis via salvage pathway; L-methionine from S-methyl-5-thio-alpha-D-ribose 1-phosphate: step 2/6.</text>
</comment>
<comment type="similarity">
    <text evidence="1">Belongs to the aldolase class II family. MtnB subfamily.</text>
</comment>
<proteinExistence type="inferred from homology"/>
<gene>
    <name evidence="1" type="primary">mtnB</name>
    <name type="ordered locus">YPK_3321</name>
</gene>
<dbReference type="EC" id="4.2.1.109" evidence="1"/>
<dbReference type="EMBL" id="CP000950">
    <property type="protein sequence ID" value="ACA69590.1"/>
    <property type="molecule type" value="Genomic_DNA"/>
</dbReference>
<dbReference type="RefSeq" id="WP_011191831.1">
    <property type="nucleotide sequence ID" value="NZ_CP009792.1"/>
</dbReference>
<dbReference type="SMR" id="B1JIK6"/>
<dbReference type="KEGG" id="ypy:YPK_3321"/>
<dbReference type="PATRIC" id="fig|502800.11.peg.4056"/>
<dbReference type="UniPathway" id="UPA00904">
    <property type="reaction ID" value="UER00875"/>
</dbReference>
<dbReference type="GO" id="GO:0005737">
    <property type="term" value="C:cytoplasm"/>
    <property type="evidence" value="ECO:0007669"/>
    <property type="project" value="InterPro"/>
</dbReference>
<dbReference type="GO" id="GO:0046570">
    <property type="term" value="F:methylthioribulose 1-phosphate dehydratase activity"/>
    <property type="evidence" value="ECO:0007669"/>
    <property type="project" value="UniProtKB-UniRule"/>
</dbReference>
<dbReference type="GO" id="GO:0008270">
    <property type="term" value="F:zinc ion binding"/>
    <property type="evidence" value="ECO:0007669"/>
    <property type="project" value="UniProtKB-UniRule"/>
</dbReference>
<dbReference type="GO" id="GO:0019509">
    <property type="term" value="P:L-methionine salvage from methylthioadenosine"/>
    <property type="evidence" value="ECO:0007669"/>
    <property type="project" value="UniProtKB-UniRule"/>
</dbReference>
<dbReference type="GO" id="GO:0005996">
    <property type="term" value="P:monosaccharide metabolic process"/>
    <property type="evidence" value="ECO:0007669"/>
    <property type="project" value="UniProtKB-ARBA"/>
</dbReference>
<dbReference type="Gene3D" id="3.40.225.10">
    <property type="entry name" value="Class II aldolase/adducin N-terminal domain"/>
    <property type="match status" value="1"/>
</dbReference>
<dbReference type="HAMAP" id="MF_01677">
    <property type="entry name" value="Salvage_MtnB"/>
    <property type="match status" value="1"/>
</dbReference>
<dbReference type="InterPro" id="IPR001303">
    <property type="entry name" value="Aldolase_II/adducin_N"/>
</dbReference>
<dbReference type="InterPro" id="IPR036409">
    <property type="entry name" value="Aldolase_II/adducin_N_sf"/>
</dbReference>
<dbReference type="InterPro" id="IPR017714">
    <property type="entry name" value="MethylthioRu-1-P_deHdtase_MtnB"/>
</dbReference>
<dbReference type="NCBIfam" id="NF006672">
    <property type="entry name" value="PRK09220.1"/>
    <property type="match status" value="1"/>
</dbReference>
<dbReference type="NCBIfam" id="TIGR03328">
    <property type="entry name" value="salvage_mtnB"/>
    <property type="match status" value="1"/>
</dbReference>
<dbReference type="PANTHER" id="PTHR10640">
    <property type="entry name" value="METHYLTHIORIBULOSE-1-PHOSPHATE DEHYDRATASE"/>
    <property type="match status" value="1"/>
</dbReference>
<dbReference type="PANTHER" id="PTHR10640:SF7">
    <property type="entry name" value="METHYLTHIORIBULOSE-1-PHOSPHATE DEHYDRATASE"/>
    <property type="match status" value="1"/>
</dbReference>
<dbReference type="Pfam" id="PF00596">
    <property type="entry name" value="Aldolase_II"/>
    <property type="match status" value="1"/>
</dbReference>
<dbReference type="SMART" id="SM01007">
    <property type="entry name" value="Aldolase_II"/>
    <property type="match status" value="1"/>
</dbReference>
<dbReference type="SUPFAM" id="SSF53639">
    <property type="entry name" value="AraD/HMP-PK domain-like"/>
    <property type="match status" value="1"/>
</dbReference>
<sequence length="222" mass="24613">MTENRQLGALLAACHWIGEKGWCPATGGNMSLRLDLAHCLITESGKDKGSLAAEDFLLVETANNHVPSGRTPSAETGLHTLLYRLYPEIQAVLHTHSVNATVLSRVERSNALVLQGYEMQKSLSGQRSHLDAVVIPIFDNDQDIPVLAQRVAAYADNRPLQYGFLVRGHGLYCWGNSVVEARRHLEGLEFLFQCELQRRLFDVNSNVDVKPNVDVNPNVEAK</sequence>
<keyword id="KW-0028">Amino-acid biosynthesis</keyword>
<keyword id="KW-0456">Lyase</keyword>
<keyword id="KW-0479">Metal-binding</keyword>
<keyword id="KW-0486">Methionine biosynthesis</keyword>
<keyword id="KW-0862">Zinc</keyword>
<accession>B1JIK6</accession>
<evidence type="ECO:0000255" key="1">
    <source>
        <dbReference type="HAMAP-Rule" id="MF_01677"/>
    </source>
</evidence>
<protein>
    <recommendedName>
        <fullName evidence="1">Methylthioribulose-1-phosphate dehydratase</fullName>
        <shortName evidence="1">MTRu-1-P dehydratase</shortName>
        <ecNumber evidence="1">4.2.1.109</ecNumber>
    </recommendedName>
</protein>
<feature type="chain" id="PRO_0000357128" description="Methylthioribulose-1-phosphate dehydratase">
    <location>
        <begin position="1"/>
        <end position="222"/>
    </location>
</feature>
<feature type="binding site" evidence="1">
    <location>
        <position position="94"/>
    </location>
    <ligand>
        <name>Zn(2+)</name>
        <dbReference type="ChEBI" id="CHEBI:29105"/>
    </ligand>
</feature>
<feature type="binding site" evidence="1">
    <location>
        <position position="96"/>
    </location>
    <ligand>
        <name>Zn(2+)</name>
        <dbReference type="ChEBI" id="CHEBI:29105"/>
    </ligand>
</feature>
<name>MTNB_YERPY</name>